<dbReference type="GO" id="GO:0031012">
    <property type="term" value="C:extracellular matrix"/>
    <property type="evidence" value="ECO:0007669"/>
    <property type="project" value="TreeGrafter"/>
</dbReference>
<dbReference type="GO" id="GO:0005615">
    <property type="term" value="C:extracellular space"/>
    <property type="evidence" value="ECO:0007669"/>
    <property type="project" value="TreeGrafter"/>
</dbReference>
<dbReference type="GO" id="GO:0030020">
    <property type="term" value="F:extracellular matrix structural constituent conferring tensile strength"/>
    <property type="evidence" value="ECO:0007669"/>
    <property type="project" value="TreeGrafter"/>
</dbReference>
<dbReference type="GO" id="GO:0030198">
    <property type="term" value="P:extracellular matrix organization"/>
    <property type="evidence" value="ECO:0007669"/>
    <property type="project" value="TreeGrafter"/>
</dbReference>
<dbReference type="InterPro" id="IPR008160">
    <property type="entry name" value="Collagen"/>
</dbReference>
<dbReference type="InterPro" id="IPR050149">
    <property type="entry name" value="Collagen_superfamily"/>
</dbReference>
<dbReference type="PANTHER" id="PTHR24023:SF1112">
    <property type="entry name" value="COL_CUTICLE_N DOMAIN-CONTAINING PROTEIN-RELATED"/>
    <property type="match status" value="1"/>
</dbReference>
<dbReference type="PANTHER" id="PTHR24023">
    <property type="entry name" value="COLLAGEN ALPHA"/>
    <property type="match status" value="1"/>
</dbReference>
<dbReference type="Pfam" id="PF01391">
    <property type="entry name" value="Collagen"/>
    <property type="match status" value="9"/>
</dbReference>
<comment type="function">
    <text evidence="5">Type I collagen is a member of group I collagen (fibrillar forming collagen).</text>
</comment>
<comment type="subunit">
    <text evidence="1">Trimers of one alpha 2(I) and two alpha 1(I) chains. Interacts (via C-terminus) with TMEM131 (via PapD-L domain); the interaction is direct and is involved in assembly and TRAPPIII ER-to-Golgi transport complex-dependent secretion of collagen.</text>
</comment>
<comment type="subcellular location">
    <subcellularLocation>
        <location>Secreted</location>
    </subcellularLocation>
    <subcellularLocation>
        <location>Secreted</location>
        <location>Extracellular space</location>
    </subcellularLocation>
    <subcellularLocation>
        <location evidence="5">Secreted</location>
        <location evidence="5">Extracellular space</location>
        <location evidence="5">Extracellular matrix</location>
    </subcellularLocation>
</comment>
<comment type="tissue specificity">
    <text evidence="3">Expressed in bones.</text>
</comment>
<comment type="PTM">
    <text evidence="1">Prolines at the third position of the tripeptide repeating unit (G-X-Y) are hydroxylated in some or all of the chains.</text>
</comment>
<comment type="miscellaneous">
    <text evidence="3">These protein fragments were extracted from an ancient rib bone collected at Bariloche in Argentina and estimated to be around 19050 years old.</text>
</comment>
<comment type="similarity">
    <text evidence="5">Belongs to the fibrillar collagen family.</text>
</comment>
<proteinExistence type="evidence at protein level"/>
<protein>
    <recommendedName>
        <fullName evidence="4">Collagen alpha-2(I) chain</fullName>
    </recommendedName>
    <alternativeName>
        <fullName evidence="1">Alpha-2 type I collagen</fullName>
    </alternativeName>
</protein>
<keyword id="KW-0903">Direct protein sequencing</keyword>
<keyword id="KW-0952">Extinct organism protein</keyword>
<keyword id="KW-0272">Extracellular matrix</keyword>
<keyword id="KW-0325">Glycoprotein</keyword>
<keyword id="KW-0379">Hydroxylation</keyword>
<keyword id="KW-0964">Secreted</keyword>
<reference evidence="5" key="1">
    <citation type="journal article" date="2019" name="Nat. Ecol. Evol.">
        <title>Palaeoproteomics resolves sloth relationships.</title>
        <authorList>
            <person name="Presslee S."/>
            <person name="Slater G.J."/>
            <person name="Pujos F."/>
            <person name="Forasiepi A.M."/>
            <person name="Fischer R."/>
            <person name="Molloy K."/>
            <person name="Mackie M."/>
            <person name="Olsen J.V."/>
            <person name="Kramarz A."/>
            <person name="Taglioretti M."/>
            <person name="Scaglia F."/>
            <person name="Lezcano M."/>
            <person name="Lanata J.L."/>
            <person name="Southon J."/>
            <person name="Feranec R."/>
            <person name="Bloch J."/>
            <person name="Hajduk A."/>
            <person name="Martin F.M."/>
            <person name="Salas Gismondi R."/>
            <person name="Reguero M."/>
            <person name="de Muizon C."/>
            <person name="Greenwood A."/>
            <person name="Chait B.T."/>
            <person name="Penkman K."/>
            <person name="Collins M."/>
            <person name="MacPhee R.D.E."/>
        </authorList>
    </citation>
    <scope>PROTEIN SEQUENCE</scope>
    <scope>TISSUE SPECIFICITY</scope>
    <scope>IDENTIFICATION BY MASS SPECTROMETRY</scope>
    <source>
        <tissue evidence="4">Bone</tissue>
    </source>
</reference>
<organism evidence="4">
    <name type="scientific">Megatherium americanum</name>
    <name type="common">Giant ground sloth</name>
    <dbReference type="NCBI Taxonomy" id="2546660"/>
    <lineage>
        <taxon>Eukaryota</taxon>
        <taxon>Metazoa</taxon>
        <taxon>Chordata</taxon>
        <taxon>Craniata</taxon>
        <taxon>Vertebrata</taxon>
        <taxon>Euteleostomi</taxon>
        <taxon>Mammalia</taxon>
        <taxon>Eutheria</taxon>
        <taxon>Xenarthra</taxon>
        <taxon>Pilosa</taxon>
        <taxon>Folivora</taxon>
        <taxon>Megatheriidae</taxon>
        <taxon>Megatherium</taxon>
    </lineage>
</organism>
<feature type="chain" id="PRO_0000448469" description="Collagen alpha-2(I) chain">
    <location>
        <begin position="1"/>
        <end position="1050"/>
    </location>
</feature>
<feature type="region of interest" description="Disordered" evidence="2">
    <location>
        <begin position="1"/>
        <end position="1050"/>
    </location>
</feature>
<feature type="compositionally biased region" description="Gly residues" evidence="2">
    <location>
        <begin position="20"/>
        <end position="32"/>
    </location>
</feature>
<feature type="compositionally biased region" description="Low complexity" evidence="2">
    <location>
        <begin position="33"/>
        <end position="46"/>
    </location>
</feature>
<feature type="compositionally biased region" description="Low complexity" evidence="2">
    <location>
        <begin position="56"/>
        <end position="77"/>
    </location>
</feature>
<feature type="compositionally biased region" description="Basic and acidic residues" evidence="2">
    <location>
        <begin position="78"/>
        <end position="92"/>
    </location>
</feature>
<feature type="compositionally biased region" description="Low complexity" evidence="2">
    <location>
        <begin position="161"/>
        <end position="190"/>
    </location>
</feature>
<feature type="compositionally biased region" description="Low complexity" evidence="2">
    <location>
        <begin position="236"/>
        <end position="257"/>
    </location>
</feature>
<feature type="compositionally biased region" description="Low complexity" evidence="2">
    <location>
        <begin position="298"/>
        <end position="311"/>
    </location>
</feature>
<feature type="compositionally biased region" description="Low complexity" evidence="2">
    <location>
        <begin position="320"/>
        <end position="338"/>
    </location>
</feature>
<feature type="compositionally biased region" description="Low complexity" evidence="2">
    <location>
        <begin position="355"/>
        <end position="371"/>
    </location>
</feature>
<feature type="compositionally biased region" description="Low complexity" evidence="2">
    <location>
        <begin position="406"/>
        <end position="425"/>
    </location>
</feature>
<feature type="compositionally biased region" description="Low complexity" evidence="2">
    <location>
        <begin position="452"/>
        <end position="467"/>
    </location>
</feature>
<feature type="compositionally biased region" description="Gly residues" evidence="2">
    <location>
        <begin position="474"/>
        <end position="483"/>
    </location>
</feature>
<feature type="compositionally biased region" description="Low complexity" evidence="2">
    <location>
        <begin position="530"/>
        <end position="547"/>
    </location>
</feature>
<feature type="compositionally biased region" description="Low complexity" evidence="2">
    <location>
        <begin position="598"/>
        <end position="642"/>
    </location>
</feature>
<feature type="compositionally biased region" description="Low complexity" evidence="2">
    <location>
        <begin position="649"/>
        <end position="669"/>
    </location>
</feature>
<feature type="compositionally biased region" description="Basic and acidic residues" evidence="2">
    <location>
        <begin position="670"/>
        <end position="679"/>
    </location>
</feature>
<feature type="compositionally biased region" description="Low complexity" evidence="2">
    <location>
        <begin position="687"/>
        <end position="697"/>
    </location>
</feature>
<feature type="compositionally biased region" description="Gly residues" evidence="2">
    <location>
        <begin position="707"/>
        <end position="716"/>
    </location>
</feature>
<feature type="compositionally biased region" description="Low complexity" evidence="2">
    <location>
        <begin position="718"/>
        <end position="727"/>
    </location>
</feature>
<feature type="compositionally biased region" description="Gly residues" evidence="2">
    <location>
        <begin position="764"/>
        <end position="773"/>
    </location>
</feature>
<feature type="compositionally biased region" description="Low complexity" evidence="2">
    <location>
        <begin position="781"/>
        <end position="808"/>
    </location>
</feature>
<feature type="compositionally biased region" description="Low complexity" evidence="2">
    <location>
        <begin position="816"/>
        <end position="841"/>
    </location>
</feature>
<feature type="compositionally biased region" description="Low complexity" evidence="2">
    <location>
        <begin position="881"/>
        <end position="903"/>
    </location>
</feature>
<feature type="compositionally biased region" description="Low complexity" evidence="2">
    <location>
        <begin position="911"/>
        <end position="926"/>
    </location>
</feature>
<feature type="compositionally biased region" description="Basic and acidic residues" evidence="2">
    <location>
        <begin position="936"/>
        <end position="947"/>
    </location>
</feature>
<feature type="compositionally biased region" description="Pro residues" evidence="2">
    <location>
        <begin position="1020"/>
        <end position="1032"/>
    </location>
</feature>
<feature type="modified residue" description="4-hydroxyproline" evidence="1">
    <location>
        <position position="10"/>
    </location>
</feature>
<feature type="modified residue" description="4-hydroxyproline" evidence="1">
    <location>
        <position position="13"/>
    </location>
</feature>
<feature type="modified residue" description="4-hydroxyproline" evidence="1">
    <location>
        <position position="40"/>
    </location>
</feature>
<feature type="modified residue" description="4-hydroxyproline" evidence="1">
    <location>
        <position position="46"/>
    </location>
</feature>
<feature type="modified residue" description="5-hydroxylysine; alternate" evidence="1">
    <location>
        <position position="114"/>
    </location>
</feature>
<feature type="modified residue" description="4-hydroxyproline" evidence="1">
    <location>
        <position position="377"/>
    </location>
</feature>
<feature type="modified residue" description="4-hydroxyproline" evidence="1">
    <location>
        <position position="380"/>
    </location>
</feature>
<feature type="glycosylation site" description="O-linked (Gal...) hydroxylysine; alternate" evidence="1">
    <location>
        <position position="114"/>
    </location>
</feature>
<feature type="unsure residue" description="L or I" evidence="4">
    <location>
        <position position="9"/>
    </location>
</feature>
<feature type="unsure residue" description="L or I" evidence="4">
    <location>
        <position position="26"/>
    </location>
</feature>
<feature type="unsure residue" description="L or I" evidence="4">
    <location>
        <position position="33"/>
    </location>
</feature>
<feature type="unsure residue" description="L or I" evidence="4">
    <location>
        <position position="110"/>
    </location>
</feature>
<feature type="unsure residue" description="I or L" evidence="4">
    <location>
        <position position="116"/>
    </location>
</feature>
<feature type="unsure residue" description="L or I" evidence="4">
    <location>
        <position position="122"/>
    </location>
</feature>
<feature type="unsure residue" description="L or I" evidence="4">
    <location>
        <position position="125"/>
    </location>
</feature>
<feature type="unsure residue" description="L or I" evidence="4">
    <location>
        <position position="154"/>
    </location>
</feature>
<feature type="unsure residue" description="I or L" evidence="4">
    <location>
        <position position="185"/>
    </location>
</feature>
<feature type="unsure residue" description="L or I" evidence="4">
    <location>
        <position position="203"/>
    </location>
</feature>
<feature type="unsure residue" description="L or I" evidence="4">
    <location>
        <position position="223"/>
    </location>
</feature>
<feature type="unsure residue" description="L or I" evidence="4">
    <location>
        <position position="241"/>
    </location>
</feature>
<feature type="unsure residue" description="L or I" evidence="4">
    <location>
        <position position="250"/>
    </location>
</feature>
<feature type="unsure residue" description="L or I" evidence="4">
    <location>
        <position position="259"/>
    </location>
</feature>
<feature type="unsure residue" description="I or L" evidence="4">
    <location>
        <position position="265"/>
    </location>
</feature>
<feature type="unsure residue" description="L or I" evidence="4">
    <location>
        <position position="280"/>
    </location>
</feature>
<feature type="unsure residue" description="L or I" evidence="4">
    <location>
        <position position="334"/>
    </location>
</feature>
<feature type="unsure residue" description="L or I" evidence="4">
    <location>
        <position position="343"/>
    </location>
</feature>
<feature type="unsure residue" description="I or L" evidence="4">
    <location>
        <position position="353"/>
    </location>
</feature>
<feature type="unsure residue" description="L or I" evidence="4">
    <location>
        <position position="382"/>
    </location>
</feature>
<feature type="unsure residue" description="L or I" evidence="4">
    <location>
        <position position="388"/>
    </location>
</feature>
<feature type="unsure residue" description="L or I" evidence="4">
    <location>
        <position position="406"/>
    </location>
</feature>
<feature type="unsure residue" description="I or L" evidence="4">
    <location>
        <position position="409"/>
    </location>
</feature>
<feature type="unsure residue" description="I or L" evidence="4">
    <location>
        <position position="416"/>
    </location>
</feature>
<feature type="unsure residue" description="I or L" evidence="4">
    <location>
        <position position="428"/>
    </location>
</feature>
<feature type="unsure residue" description="L or I" evidence="4">
    <location>
        <position position="451"/>
    </location>
</feature>
<feature type="unsure residue" description="L or I" evidence="4">
    <location>
        <position position="493"/>
    </location>
</feature>
<feature type="unsure residue" description="I or L" evidence="4">
    <location>
        <position position="511"/>
    </location>
</feature>
<feature type="unsure residue" description="L or I" evidence="4">
    <location>
        <position position="517"/>
    </location>
</feature>
<feature type="unsure residue" description="I or L" evidence="4">
    <location>
        <position position="542"/>
    </location>
</feature>
<feature type="unsure residue" description="L or I" evidence="4">
    <location>
        <position position="573"/>
    </location>
</feature>
<feature type="unsure residue" description="I or L" evidence="4">
    <location>
        <position position="582"/>
    </location>
</feature>
<feature type="unsure residue" description="L or I" evidence="4">
    <location>
        <position position="594"/>
    </location>
</feature>
<feature type="unsure residue" description="I or L" evidence="4">
    <location>
        <position position="684"/>
    </location>
</feature>
<feature type="unsure residue" description="I or L" evidence="4">
    <location>
        <position position="735"/>
    </location>
</feature>
<feature type="unsure residue" description="L or I" evidence="4">
    <location>
        <position position="750"/>
    </location>
</feature>
<feature type="unsure residue" description="L or I" evidence="4">
    <location>
        <position position="798"/>
    </location>
</feature>
<feature type="unsure residue" description="L or I" evidence="4">
    <location>
        <position position="799"/>
    </location>
</feature>
<feature type="unsure residue" description="I or L" evidence="4">
    <location>
        <position position="804"/>
    </location>
</feature>
<feature type="unsure residue" description="L or I" evidence="4">
    <location>
        <position position="805"/>
    </location>
</feature>
<feature type="unsure residue" description="L or I" evidence="4">
    <location>
        <position position="807"/>
    </location>
</feature>
<feature type="unsure residue" description="L or I" evidence="4">
    <location>
        <position position="816"/>
    </location>
</feature>
<feature type="unsure residue" description="L or I" evidence="4">
    <location>
        <position position="829"/>
    </location>
</feature>
<feature type="unsure residue" description="I or L" evidence="4">
    <location>
        <position position="831"/>
    </location>
</feature>
<feature type="unsure residue" description="L or I" evidence="4">
    <location>
        <position position="872"/>
    </location>
</feature>
<feature type="unsure residue" description="L or I" evidence="4">
    <location>
        <position position="924"/>
    </location>
</feature>
<feature type="unsure residue" description="I or L" evidence="4">
    <location>
        <position position="935"/>
    </location>
</feature>
<feature type="unsure residue" description="L or I" evidence="4">
    <location>
        <position position="950"/>
    </location>
</feature>
<feature type="unsure residue" description="L or I" evidence="4">
    <location>
        <position position="953"/>
    </location>
</feature>
<feature type="unsure residue" description="L or I" evidence="4">
    <location>
        <position position="959"/>
    </location>
</feature>
<feature type="unsure residue" description="L or I" evidence="4">
    <location>
        <position position="962"/>
    </location>
</feature>
<feature type="unsure residue" description="L or I" evidence="4">
    <location>
        <position position="965"/>
    </location>
</feature>
<feature type="unsure residue" description="I or L" evidence="4">
    <location>
        <position position="1010"/>
    </location>
</feature>
<feature type="non-consecutive residues" evidence="4">
    <location>
        <begin position="16"/>
        <end position="17"/>
    </location>
</feature>
<feature type="non-consecutive residues" evidence="4">
    <location>
        <begin position="22"/>
        <end position="23"/>
    </location>
</feature>
<feature type="non-consecutive residues" evidence="4">
    <location>
        <begin position="51"/>
        <end position="52"/>
    </location>
</feature>
<feature type="non-consecutive residues" evidence="4">
    <location>
        <begin position="131"/>
        <end position="132"/>
    </location>
</feature>
<feature type="non-consecutive residues" evidence="4">
    <location>
        <begin position="563"/>
        <end position="564"/>
    </location>
</feature>
<feature type="non-consecutive residues" evidence="4">
    <location>
        <begin position="845"/>
        <end position="846"/>
    </location>
</feature>
<feature type="non-terminal residue" evidence="4">
    <location>
        <position position="1"/>
    </location>
</feature>
<feature type="non-terminal residue" evidence="4">
    <location>
        <position position="1050"/>
    </location>
</feature>
<accession>C0HLJ6</accession>
<sequence>SGGFDFSFLPQPPQEKDGGRYYGVGLGPGPMGLMGPRGPPGASGAPGPQGFGPAGEPGEPGQTGPAGARGPPGAPGKAGEDGHPGKPGRPGERGVVGPQGARGFPGTPGLPGFKGIRGHNGLDGLKGQPGAGVKGEPGAPGENGTPGQTGARGLPGERGRVGAPGPAGARGSDGSVGPVGPAGPIGSAGPPGFPGAPGPKGELGPVGNTGPSGPAGPRGEQGLPGVSGPVGPPGNPGANGLTGAKGAAGLPGVAGAPGLPGPRGIPGPVGASGATGARGLVGEPGPAGSKGESGNKGEPGSAGPQGPPGSSGEEGKRGPNGESGSTGPTGPPGLRGNPGSRGLPGADGRAGVIGPAGARGASGPAGVRGPSGDTGRPGEPGLMGARGLPGSPGNVGPAGKEGPAGLPGIDGRPGPIGPAGARGEAGNIGFPGPKGPAGDPGKAGEKGHAGLAGNRGAPGPDGNNGAQGPPGPQGVQGGKGEQGPAGPPGFQGLPGPAGTTGEAGKPGERGIPGEFGLPGPAGPRGERGPPGESGAVGPSGAIGSRGPSGPPGPDGNKGEPGVVTAGPAGSGGLPGERGAAGIPGGKGEKGETGLRGEVGTTGRDGARGAPGAVGAPGPAGATGDRGEAGAAGPAGPAGPRGSPGERGEVGPAGPNGFAGPAGAAGQPGAKGERGTKGPKGENGIVGPTGPVGSAGPAGPNGPAGPAGSRGDGGPPGMTGFPGAAGRTGPPGPSGITGPPGPPGAAGKEGLRGPRGDQGPVGRTGETGAGGPPGFTGEKGPSGEPGTAGPPGTAGPQGLLGAPGILGLPGSRGERGLPGVAGAVGEPGPLGIAGPPGARGPSGAVGPGVNGAPGETGRDGNPGSDGPPGRDGLPGHKGERGYAGNAGPVGAAGAPGPHGTVGPAGKHGNRGEPGPVGSVGPVGALGPRGPSGPQGIRGDKGEPGDKGPRGLPGLKGHNGLQGLPGLAGQHGDQGSPGPVGPAGPRGPAGPSGPAGKDGRTGHPGAVGPAGIRGSQGSQGPSGPPGPPGPPGPPGASGGGYDFGYEGDFYRA</sequence>
<evidence type="ECO:0000250" key="1">
    <source>
        <dbReference type="UniProtKB" id="P08123"/>
    </source>
</evidence>
<evidence type="ECO:0000256" key="2">
    <source>
        <dbReference type="SAM" id="MobiDB-lite"/>
    </source>
</evidence>
<evidence type="ECO:0000269" key="3">
    <source>
    </source>
</evidence>
<evidence type="ECO:0000303" key="4">
    <source>
    </source>
</evidence>
<evidence type="ECO:0000305" key="5"/>
<name>CO1A2_MEGAE</name>